<evidence type="ECO:0000255" key="1">
    <source>
        <dbReference type="HAMAP-Rule" id="MF_01030"/>
    </source>
</evidence>
<keyword id="KW-0456">Lyase</keyword>
<keyword id="KW-0663">Pyridoxal phosphate</keyword>
<sequence>MPVGRSLSLDPNLLAQLQSHSPTLWLNPHQGMPLPDFAPTAADLADADARLRRCAGLLAELFAELRPSGGLIASPLQPAEPLKRAARAGHAQAGAWYVKRDDALPVAGSIKARGGFHEVLALAESIAERHGLAGADTDRRALASGAARARFARHTVMVGSTGNLGLSIGMLASALGFRTVAHMSADAKAWKKARLRTRGVEVVEHAGDYAKAVDAGRRQAAGMPCCHFVDDEGSRMLFLGYATAAAELAAQLAQAGRPVDARHPLFVHLPCGVGGAPGGIVYGLKALYGEHVHAFVAEPTASPCVLVQLAGDAAHPRSVYDIGLDNRTEADGLAVAQASPLAAALLRAQAAGAFTVDDRQLFAHLLDARERLGIDLEPSAAAAFGGPAWIAGSDAGRAYLRGRGIDPDAATHVIWATGGSLVPAQEHRRFQAHARAQRQVGGAGA</sequence>
<dbReference type="EC" id="4.3.1.18" evidence="1"/>
<dbReference type="EMBL" id="CP000125">
    <property type="protein sequence ID" value="ABA52188.1"/>
    <property type="molecule type" value="Genomic_DNA"/>
</dbReference>
<dbReference type="RefSeq" id="WP_004529338.1">
    <property type="nucleotide sequence ID" value="NC_007435.1"/>
</dbReference>
<dbReference type="SMR" id="Q3JJ76"/>
<dbReference type="EnsemblBacteria" id="ABA52188">
    <property type="protein sequence ID" value="ABA52188"/>
    <property type="gene ID" value="BURPS1710b_A1220"/>
</dbReference>
<dbReference type="KEGG" id="bpm:BURPS1710b_A1220"/>
<dbReference type="HOGENOM" id="CLU_035707_0_0_4"/>
<dbReference type="Proteomes" id="UP000002700">
    <property type="component" value="Chromosome II"/>
</dbReference>
<dbReference type="GO" id="GO:0008721">
    <property type="term" value="F:D-serine ammonia-lyase activity"/>
    <property type="evidence" value="ECO:0007669"/>
    <property type="project" value="UniProtKB-EC"/>
</dbReference>
<dbReference type="GO" id="GO:0016836">
    <property type="term" value="F:hydro-lyase activity"/>
    <property type="evidence" value="ECO:0007669"/>
    <property type="project" value="UniProtKB-UniRule"/>
</dbReference>
<dbReference type="GO" id="GO:0030170">
    <property type="term" value="F:pyridoxal phosphate binding"/>
    <property type="evidence" value="ECO:0007669"/>
    <property type="project" value="InterPro"/>
</dbReference>
<dbReference type="GO" id="GO:0036088">
    <property type="term" value="P:D-serine catabolic process"/>
    <property type="evidence" value="ECO:0007669"/>
    <property type="project" value="TreeGrafter"/>
</dbReference>
<dbReference type="GO" id="GO:0009097">
    <property type="term" value="P:isoleucine biosynthetic process"/>
    <property type="evidence" value="ECO:0007669"/>
    <property type="project" value="TreeGrafter"/>
</dbReference>
<dbReference type="Gene3D" id="3.40.50.1100">
    <property type="match status" value="2"/>
</dbReference>
<dbReference type="HAMAP" id="MF_01030">
    <property type="entry name" value="D_Ser_dehydrat"/>
    <property type="match status" value="1"/>
</dbReference>
<dbReference type="InterPro" id="IPR011780">
    <property type="entry name" value="D_Ser_am_lyase"/>
</dbReference>
<dbReference type="InterPro" id="IPR050147">
    <property type="entry name" value="Ser/Thr_Dehydratase"/>
</dbReference>
<dbReference type="InterPro" id="IPR001926">
    <property type="entry name" value="TrpB-like_PALP"/>
</dbReference>
<dbReference type="InterPro" id="IPR036052">
    <property type="entry name" value="TrpB-like_PALP_sf"/>
</dbReference>
<dbReference type="NCBIfam" id="TIGR02035">
    <property type="entry name" value="D_Ser_am_lyase"/>
    <property type="match status" value="1"/>
</dbReference>
<dbReference type="NCBIfam" id="NF002823">
    <property type="entry name" value="PRK02991.1"/>
    <property type="match status" value="1"/>
</dbReference>
<dbReference type="PANTHER" id="PTHR48078:SF9">
    <property type="entry name" value="D-SERINE DEHYDRATASE"/>
    <property type="match status" value="1"/>
</dbReference>
<dbReference type="PANTHER" id="PTHR48078">
    <property type="entry name" value="THREONINE DEHYDRATASE, MITOCHONDRIAL-RELATED"/>
    <property type="match status" value="1"/>
</dbReference>
<dbReference type="Pfam" id="PF00291">
    <property type="entry name" value="PALP"/>
    <property type="match status" value="1"/>
</dbReference>
<dbReference type="SUPFAM" id="SSF53686">
    <property type="entry name" value="Tryptophan synthase beta subunit-like PLP-dependent enzymes"/>
    <property type="match status" value="1"/>
</dbReference>
<organism>
    <name type="scientific">Burkholderia pseudomallei (strain 1710b)</name>
    <dbReference type="NCBI Taxonomy" id="320372"/>
    <lineage>
        <taxon>Bacteria</taxon>
        <taxon>Pseudomonadati</taxon>
        <taxon>Pseudomonadota</taxon>
        <taxon>Betaproteobacteria</taxon>
        <taxon>Burkholderiales</taxon>
        <taxon>Burkholderiaceae</taxon>
        <taxon>Burkholderia</taxon>
        <taxon>pseudomallei group</taxon>
    </lineage>
</organism>
<reference key="1">
    <citation type="journal article" date="2010" name="Genome Biol. Evol.">
        <title>Continuing evolution of Burkholderia mallei through genome reduction and large-scale rearrangements.</title>
        <authorList>
            <person name="Losada L."/>
            <person name="Ronning C.M."/>
            <person name="DeShazer D."/>
            <person name="Woods D."/>
            <person name="Fedorova N."/>
            <person name="Kim H.S."/>
            <person name="Shabalina S.A."/>
            <person name="Pearson T.R."/>
            <person name="Brinkac L."/>
            <person name="Tan P."/>
            <person name="Nandi T."/>
            <person name="Crabtree J."/>
            <person name="Badger J."/>
            <person name="Beckstrom-Sternberg S."/>
            <person name="Saqib M."/>
            <person name="Schutzer S.E."/>
            <person name="Keim P."/>
            <person name="Nierman W.C."/>
        </authorList>
    </citation>
    <scope>NUCLEOTIDE SEQUENCE [LARGE SCALE GENOMIC DNA]</scope>
    <source>
        <strain>1710b</strain>
    </source>
</reference>
<name>SDHD_BURP1</name>
<feature type="chain" id="PRO_0000291720" description="Probable D-serine dehydratase">
    <location>
        <begin position="1"/>
        <end position="445"/>
    </location>
</feature>
<feature type="modified residue" description="N6-(pyridoxal phosphate)lysine" evidence="1">
    <location>
        <position position="111"/>
    </location>
</feature>
<comment type="catalytic activity">
    <reaction evidence="1">
        <text>D-serine = pyruvate + NH4(+)</text>
        <dbReference type="Rhea" id="RHEA:13977"/>
        <dbReference type="ChEBI" id="CHEBI:15361"/>
        <dbReference type="ChEBI" id="CHEBI:28938"/>
        <dbReference type="ChEBI" id="CHEBI:35247"/>
        <dbReference type="EC" id="4.3.1.18"/>
    </reaction>
</comment>
<comment type="cofactor">
    <cofactor evidence="1">
        <name>pyridoxal 5'-phosphate</name>
        <dbReference type="ChEBI" id="CHEBI:597326"/>
    </cofactor>
</comment>
<comment type="similarity">
    <text evidence="1">Belongs to the serine/threonine dehydratase family. DsdA subfamily.</text>
</comment>
<proteinExistence type="inferred from homology"/>
<accession>Q3JJ76</accession>
<gene>
    <name evidence="1" type="primary">dsdA</name>
    <name type="ordered locus">BURPS1710b_A1220</name>
</gene>
<protein>
    <recommendedName>
        <fullName evidence="1">Probable D-serine dehydratase</fullName>
        <ecNumber evidence="1">4.3.1.18</ecNumber>
    </recommendedName>
    <alternativeName>
        <fullName evidence="1">D-serine deaminase</fullName>
        <shortName evidence="1">DSD</shortName>
    </alternativeName>
</protein>